<protein>
    <recommendedName>
        <fullName>Protein MgtC</fullName>
    </recommendedName>
</protein>
<dbReference type="EMBL" id="AM040265">
    <property type="protein sequence ID" value="CAJ12205.1"/>
    <property type="molecule type" value="Genomic_DNA"/>
</dbReference>
<dbReference type="RefSeq" id="WP_002966539.1">
    <property type="nucleotide sequence ID" value="NZ_KN046823.1"/>
</dbReference>
<dbReference type="SMR" id="Q2YIG0"/>
<dbReference type="STRING" id="359391.BAB2_0039"/>
<dbReference type="KEGG" id="bmf:BAB2_0039"/>
<dbReference type="PATRIC" id="fig|359391.11.peg.1990"/>
<dbReference type="HOGENOM" id="CLU_079292_0_0_5"/>
<dbReference type="PhylomeDB" id="Q2YIG0"/>
<dbReference type="Proteomes" id="UP000002719">
    <property type="component" value="Chromosome II"/>
</dbReference>
<dbReference type="GO" id="GO:0005886">
    <property type="term" value="C:plasma membrane"/>
    <property type="evidence" value="ECO:0007669"/>
    <property type="project" value="UniProtKB-SubCell"/>
</dbReference>
<dbReference type="Gene3D" id="3.30.70.260">
    <property type="match status" value="1"/>
</dbReference>
<dbReference type="InterPro" id="IPR048640">
    <property type="entry name" value="MgtC-like_C"/>
</dbReference>
<dbReference type="InterPro" id="IPR003416">
    <property type="entry name" value="MgtC/SapB/SrpB/YhiD_fam"/>
</dbReference>
<dbReference type="InterPro" id="IPR049177">
    <property type="entry name" value="MgtC_SapB_SrpB_YhiD_N"/>
</dbReference>
<dbReference type="PANTHER" id="PTHR33778">
    <property type="entry name" value="PROTEIN MGTC"/>
    <property type="match status" value="1"/>
</dbReference>
<dbReference type="PANTHER" id="PTHR33778:SF3">
    <property type="entry name" value="PROTEIN MGTC"/>
    <property type="match status" value="1"/>
</dbReference>
<dbReference type="Pfam" id="PF02308">
    <property type="entry name" value="MgtC"/>
    <property type="match status" value="1"/>
</dbReference>
<dbReference type="Pfam" id="PF21770">
    <property type="entry name" value="MgtC_SapB_C"/>
    <property type="match status" value="1"/>
</dbReference>
<dbReference type="PRINTS" id="PR01837">
    <property type="entry name" value="MGTCSAPBPROT"/>
</dbReference>
<sequence length="238" mass="25357">MVWKPLAHTAACLAGAFLLGGLIGFERQFRHRLAGLRTNTLVAVGAATFVVFSSLVSGDSSPTRVAAQIVSGIGFLGAGIIFKEGFNVRGLNTAATLWCSAAVGVLCGAGLISHAAVATVFIIAVNALLRPLVQVLEFQAMRRGAFQPTYAIDIICHGDAEAQVRALLLRDIGDHLHIHELESSNIEGTNRVEVSATVRADQRQDRLLEQIVGHLSLEPRITSARWRIEDDSGGLSGL</sequence>
<accession>Q2YIG0</accession>
<reference key="1">
    <citation type="journal article" date="2005" name="Infect. Immun.">
        <title>Whole-genome analyses of speciation events in pathogenic Brucellae.</title>
        <authorList>
            <person name="Chain P.S."/>
            <person name="Comerci D.J."/>
            <person name="Tolmasky M.E."/>
            <person name="Larimer F.W."/>
            <person name="Malfatti S.A."/>
            <person name="Vergez L.M."/>
            <person name="Aguero F."/>
            <person name="Land M.L."/>
            <person name="Ugalde R.A."/>
            <person name="Garcia E."/>
        </authorList>
    </citation>
    <scope>NUCLEOTIDE SEQUENCE [LARGE SCALE GENOMIC DNA]</scope>
    <source>
        <strain>2308</strain>
    </source>
</reference>
<comment type="function">
    <text evidence="1">Virulence factor required for growth in low Mg(2+) medium and for intramacrophage survival. May be involved in regulating membrane potential by activating Na(+)/K(+)-ATPase (By similarity).</text>
</comment>
<comment type="subcellular location">
    <subcellularLocation>
        <location evidence="3">Cell inner membrane</location>
        <topology evidence="3">Multi-pass membrane protein</topology>
    </subcellularLocation>
</comment>
<comment type="similarity">
    <text evidence="3">Belongs to the MgtC/SapB family.</text>
</comment>
<organism>
    <name type="scientific">Brucella abortus (strain 2308)</name>
    <dbReference type="NCBI Taxonomy" id="359391"/>
    <lineage>
        <taxon>Bacteria</taxon>
        <taxon>Pseudomonadati</taxon>
        <taxon>Pseudomonadota</taxon>
        <taxon>Alphaproteobacteria</taxon>
        <taxon>Hyphomicrobiales</taxon>
        <taxon>Brucellaceae</taxon>
        <taxon>Brucella/Ochrobactrum group</taxon>
        <taxon>Brucella</taxon>
    </lineage>
</organism>
<name>MGTC_BRUA2</name>
<gene>
    <name type="primary">mgtC</name>
    <name type="ordered locus">BAB2_0039</name>
</gene>
<feature type="chain" id="PRO_0000250524" description="Protein MgtC">
    <location>
        <begin position="1"/>
        <end position="238"/>
    </location>
</feature>
<feature type="transmembrane region" description="Helical" evidence="2">
    <location>
        <begin position="5"/>
        <end position="25"/>
    </location>
</feature>
<feature type="transmembrane region" description="Helical" evidence="2">
    <location>
        <begin position="38"/>
        <end position="58"/>
    </location>
</feature>
<feature type="transmembrane region" description="Helical" evidence="2">
    <location>
        <begin position="66"/>
        <end position="86"/>
    </location>
</feature>
<feature type="transmembrane region" description="Helical" evidence="2">
    <location>
        <begin position="105"/>
        <end position="125"/>
    </location>
</feature>
<proteinExistence type="inferred from homology"/>
<keyword id="KW-0997">Cell inner membrane</keyword>
<keyword id="KW-1003">Cell membrane</keyword>
<keyword id="KW-0472">Membrane</keyword>
<keyword id="KW-1185">Reference proteome</keyword>
<keyword id="KW-0812">Transmembrane</keyword>
<keyword id="KW-1133">Transmembrane helix</keyword>
<keyword id="KW-0843">Virulence</keyword>
<evidence type="ECO:0000250" key="1"/>
<evidence type="ECO:0000255" key="2"/>
<evidence type="ECO:0000305" key="3"/>